<evidence type="ECO:0000255" key="1">
    <source>
        <dbReference type="HAMAP-Rule" id="MF_00736"/>
    </source>
</evidence>
<evidence type="ECO:0000305" key="2"/>
<proteinExistence type="inferred from homology"/>
<gene>
    <name evidence="1" type="primary">rpl11</name>
    <name type="ordered locus">TON_0179</name>
</gene>
<dbReference type="EMBL" id="CP000855">
    <property type="protein sequence ID" value="ACJ15664.1"/>
    <property type="molecule type" value="Genomic_DNA"/>
</dbReference>
<dbReference type="RefSeq" id="WP_012571137.1">
    <property type="nucleotide sequence ID" value="NC_011529.1"/>
</dbReference>
<dbReference type="SMR" id="B6YSX7"/>
<dbReference type="STRING" id="523850.TON_0179"/>
<dbReference type="GeneID" id="7017835"/>
<dbReference type="KEGG" id="ton:TON_0179"/>
<dbReference type="PATRIC" id="fig|523850.10.peg.179"/>
<dbReference type="eggNOG" id="arCOG04372">
    <property type="taxonomic scope" value="Archaea"/>
</dbReference>
<dbReference type="HOGENOM" id="CLU_074237_4_0_2"/>
<dbReference type="OrthoDB" id="8842at2157"/>
<dbReference type="Proteomes" id="UP000002727">
    <property type="component" value="Chromosome"/>
</dbReference>
<dbReference type="GO" id="GO:0015934">
    <property type="term" value="C:large ribosomal subunit"/>
    <property type="evidence" value="ECO:0007669"/>
    <property type="project" value="TreeGrafter"/>
</dbReference>
<dbReference type="GO" id="GO:0070180">
    <property type="term" value="F:large ribosomal subunit rRNA binding"/>
    <property type="evidence" value="ECO:0007669"/>
    <property type="project" value="UniProtKB-UniRule"/>
</dbReference>
<dbReference type="GO" id="GO:0003735">
    <property type="term" value="F:structural constituent of ribosome"/>
    <property type="evidence" value="ECO:0007669"/>
    <property type="project" value="InterPro"/>
</dbReference>
<dbReference type="GO" id="GO:0006412">
    <property type="term" value="P:translation"/>
    <property type="evidence" value="ECO:0007669"/>
    <property type="project" value="UniProtKB-UniRule"/>
</dbReference>
<dbReference type="CDD" id="cd00349">
    <property type="entry name" value="Ribosomal_L11"/>
    <property type="match status" value="1"/>
</dbReference>
<dbReference type="FunFam" id="1.10.10.250:FF:000006">
    <property type="entry name" value="50S ribosomal protein L11"/>
    <property type="match status" value="1"/>
</dbReference>
<dbReference type="FunFam" id="3.30.1550.10:FF:000007">
    <property type="entry name" value="50S ribosomal protein L11"/>
    <property type="match status" value="1"/>
</dbReference>
<dbReference type="Gene3D" id="1.10.10.250">
    <property type="entry name" value="Ribosomal protein L11, C-terminal domain"/>
    <property type="match status" value="1"/>
</dbReference>
<dbReference type="Gene3D" id="3.30.1550.10">
    <property type="entry name" value="Ribosomal protein L11/L12, N-terminal domain"/>
    <property type="match status" value="1"/>
</dbReference>
<dbReference type="HAMAP" id="MF_00736">
    <property type="entry name" value="Ribosomal_uL11"/>
    <property type="match status" value="1"/>
</dbReference>
<dbReference type="InterPro" id="IPR000911">
    <property type="entry name" value="Ribosomal_uL11"/>
</dbReference>
<dbReference type="InterPro" id="IPR020783">
    <property type="entry name" value="Ribosomal_uL11_C"/>
</dbReference>
<dbReference type="InterPro" id="IPR036769">
    <property type="entry name" value="Ribosomal_uL11_C_sf"/>
</dbReference>
<dbReference type="InterPro" id="IPR020785">
    <property type="entry name" value="Ribosomal_uL11_CS"/>
</dbReference>
<dbReference type="InterPro" id="IPR020784">
    <property type="entry name" value="Ribosomal_uL11_N"/>
</dbReference>
<dbReference type="InterPro" id="IPR036796">
    <property type="entry name" value="Ribosomal_uL11_N_sf"/>
</dbReference>
<dbReference type="NCBIfam" id="NF002232">
    <property type="entry name" value="PRK01143.1"/>
    <property type="match status" value="1"/>
</dbReference>
<dbReference type="PANTHER" id="PTHR11661">
    <property type="entry name" value="60S RIBOSOMAL PROTEIN L12"/>
    <property type="match status" value="1"/>
</dbReference>
<dbReference type="PANTHER" id="PTHR11661:SF1">
    <property type="entry name" value="LARGE RIBOSOMAL SUBUNIT PROTEIN UL11M"/>
    <property type="match status" value="1"/>
</dbReference>
<dbReference type="Pfam" id="PF00298">
    <property type="entry name" value="Ribosomal_L11"/>
    <property type="match status" value="1"/>
</dbReference>
<dbReference type="Pfam" id="PF03946">
    <property type="entry name" value="Ribosomal_L11_N"/>
    <property type="match status" value="1"/>
</dbReference>
<dbReference type="SMART" id="SM00649">
    <property type="entry name" value="RL11"/>
    <property type="match status" value="1"/>
</dbReference>
<dbReference type="SUPFAM" id="SSF54747">
    <property type="entry name" value="Ribosomal L11/L12e N-terminal domain"/>
    <property type="match status" value="1"/>
</dbReference>
<dbReference type="SUPFAM" id="SSF46906">
    <property type="entry name" value="Ribosomal protein L11, C-terminal domain"/>
    <property type="match status" value="1"/>
</dbReference>
<dbReference type="PROSITE" id="PS00359">
    <property type="entry name" value="RIBOSOMAL_L11"/>
    <property type="match status" value="1"/>
</dbReference>
<protein>
    <recommendedName>
        <fullName evidence="1">Large ribosomal subunit protein uL11</fullName>
    </recommendedName>
    <alternativeName>
        <fullName evidence="2">50S ribosomal protein L11</fullName>
    </alternativeName>
</protein>
<name>RL11_THEON</name>
<accession>B6YSX7</accession>
<reference key="1">
    <citation type="journal article" date="2008" name="J. Bacteriol.">
        <title>The complete genome sequence of Thermococcus onnurineus NA1 reveals a mixed heterotrophic and carboxydotrophic metabolism.</title>
        <authorList>
            <person name="Lee H.S."/>
            <person name="Kang S.G."/>
            <person name="Bae S.S."/>
            <person name="Lim J.K."/>
            <person name="Cho Y."/>
            <person name="Kim Y.J."/>
            <person name="Jeon J.H."/>
            <person name="Cha S.-S."/>
            <person name="Kwon K.K."/>
            <person name="Kim H.-T."/>
            <person name="Park C.-J."/>
            <person name="Lee H.-W."/>
            <person name="Kim S.I."/>
            <person name="Chun J."/>
            <person name="Colwell R.R."/>
            <person name="Kim S.-J."/>
            <person name="Lee J.-H."/>
        </authorList>
    </citation>
    <scope>NUCLEOTIDE SEQUENCE [LARGE SCALE GENOMIC DNA]</scope>
    <source>
        <strain>NA1</strain>
    </source>
</reference>
<comment type="function">
    <text evidence="1">Forms part of the ribosomal stalk which helps the ribosome interact with GTP-bound translation factors.</text>
</comment>
<comment type="subunit">
    <text evidence="1">Part of the ribosomal stalk of the 50S ribosomal subunit. Interacts with L10 and the large rRNA to form the base of the stalk. L10 forms an elongated spine to which L12 dimers bind in a sequential fashion forming a multimeric L10(L12)X complex.</text>
</comment>
<comment type="similarity">
    <text evidence="1">Belongs to the universal ribosomal protein uL11 family.</text>
</comment>
<keyword id="KW-0687">Ribonucleoprotein</keyword>
<keyword id="KW-0689">Ribosomal protein</keyword>
<keyword id="KW-0694">RNA-binding</keyword>
<keyword id="KW-0699">rRNA-binding</keyword>
<organism>
    <name type="scientific">Thermococcus onnurineus (strain NA1)</name>
    <dbReference type="NCBI Taxonomy" id="523850"/>
    <lineage>
        <taxon>Archaea</taxon>
        <taxon>Methanobacteriati</taxon>
        <taxon>Methanobacteriota</taxon>
        <taxon>Thermococci</taxon>
        <taxon>Thermococcales</taxon>
        <taxon>Thermococcaceae</taxon>
        <taxon>Thermococcus</taxon>
    </lineage>
</organism>
<feature type="chain" id="PRO_1000195759" description="Large ribosomal subunit protein uL11">
    <location>
        <begin position="1"/>
        <end position="163"/>
    </location>
</feature>
<sequence>MPQVVEVLVEGGKASPGPPLGPAIGPLGLNVKQVVDEINKATKDFEGMQVPVKIIVEDPKKKTFRIEVGVPPVSQLIKKELGIPKGSSEAGHSPVGNLTMEQVIRIAKAKMDQMLAADLKAAAKEVIGTALSMGVTVEGKDPREVQKEIDEGVYDEIFANAEE</sequence>